<feature type="chain" id="PRO_0000204009" description="UPF0246 protein SP_1547">
    <location>
        <begin position="1"/>
        <end position="242"/>
    </location>
</feature>
<organism>
    <name type="scientific">Streptococcus pneumoniae serotype 4 (strain ATCC BAA-334 / TIGR4)</name>
    <dbReference type="NCBI Taxonomy" id="170187"/>
    <lineage>
        <taxon>Bacteria</taxon>
        <taxon>Bacillati</taxon>
        <taxon>Bacillota</taxon>
        <taxon>Bacilli</taxon>
        <taxon>Lactobacillales</taxon>
        <taxon>Streptococcaceae</taxon>
        <taxon>Streptococcus</taxon>
    </lineage>
</organism>
<reference key="1">
    <citation type="journal article" date="2001" name="Science">
        <title>Complete genome sequence of a virulent isolate of Streptococcus pneumoniae.</title>
        <authorList>
            <person name="Tettelin H."/>
            <person name="Nelson K.E."/>
            <person name="Paulsen I.T."/>
            <person name="Eisen J.A."/>
            <person name="Read T.D."/>
            <person name="Peterson S.N."/>
            <person name="Heidelberg J.F."/>
            <person name="DeBoy R.T."/>
            <person name="Haft D.H."/>
            <person name="Dodson R.J."/>
            <person name="Durkin A.S."/>
            <person name="Gwinn M.L."/>
            <person name="Kolonay J.F."/>
            <person name="Nelson W.C."/>
            <person name="Peterson J.D."/>
            <person name="Umayam L.A."/>
            <person name="White O."/>
            <person name="Salzberg S.L."/>
            <person name="Lewis M.R."/>
            <person name="Radune D."/>
            <person name="Holtzapple E.K."/>
            <person name="Khouri H.M."/>
            <person name="Wolf A.M."/>
            <person name="Utterback T.R."/>
            <person name="Hansen C.L."/>
            <person name="McDonald L.A."/>
            <person name="Feldblyum T.V."/>
            <person name="Angiuoli S.V."/>
            <person name="Dickinson T."/>
            <person name="Hickey E.K."/>
            <person name="Holt I.E."/>
            <person name="Loftus B.J."/>
            <person name="Yang F."/>
            <person name="Smith H.O."/>
            <person name="Venter J.C."/>
            <person name="Dougherty B.A."/>
            <person name="Morrison D.A."/>
            <person name="Hollingshead S.K."/>
            <person name="Fraser C.M."/>
        </authorList>
    </citation>
    <scope>NUCLEOTIDE SEQUENCE [LARGE SCALE GENOMIC DNA]</scope>
    <source>
        <strain>ATCC BAA-334 / TIGR4</strain>
    </source>
</reference>
<protein>
    <recommendedName>
        <fullName evidence="1">UPF0246 protein SP_1547</fullName>
    </recommendedName>
</protein>
<accession>Q97PQ6</accession>
<name>Y1547_STRPN</name>
<comment type="similarity">
    <text evidence="1">Belongs to the UPF0246 family.</text>
</comment>
<evidence type="ECO:0000255" key="1">
    <source>
        <dbReference type="HAMAP-Rule" id="MF_00652"/>
    </source>
</evidence>
<gene>
    <name type="ordered locus">SP_1547</name>
</gene>
<proteinExistence type="inferred from homology"/>
<keyword id="KW-1185">Reference proteome</keyword>
<dbReference type="EMBL" id="AE005672">
    <property type="protein sequence ID" value="AAK75634.1"/>
    <property type="molecule type" value="Genomic_DNA"/>
</dbReference>
<dbReference type="PIR" id="A95180">
    <property type="entry name" value="A95180"/>
</dbReference>
<dbReference type="SMR" id="Q97PQ6"/>
<dbReference type="PaxDb" id="170187-SP_1547"/>
<dbReference type="EnsemblBacteria" id="AAK75634">
    <property type="protein sequence ID" value="AAK75634"/>
    <property type="gene ID" value="SP_1547"/>
</dbReference>
<dbReference type="KEGG" id="spn:SP_1547"/>
<dbReference type="eggNOG" id="COG3022">
    <property type="taxonomic scope" value="Bacteria"/>
</dbReference>
<dbReference type="PhylomeDB" id="Q97PQ6"/>
<dbReference type="BioCyc" id="SPNE170187:G1FZB-1566-MONOMER"/>
<dbReference type="Proteomes" id="UP000000585">
    <property type="component" value="Chromosome"/>
</dbReference>
<dbReference type="GO" id="GO:0005829">
    <property type="term" value="C:cytosol"/>
    <property type="evidence" value="ECO:0007669"/>
    <property type="project" value="TreeGrafter"/>
</dbReference>
<dbReference type="GO" id="GO:0033194">
    <property type="term" value="P:response to hydroperoxide"/>
    <property type="evidence" value="ECO:0007669"/>
    <property type="project" value="TreeGrafter"/>
</dbReference>
<dbReference type="HAMAP" id="MF_00652">
    <property type="entry name" value="UPF0246"/>
    <property type="match status" value="1"/>
</dbReference>
<dbReference type="InterPro" id="IPR005583">
    <property type="entry name" value="YaaA"/>
</dbReference>
<dbReference type="NCBIfam" id="NF002543">
    <property type="entry name" value="PRK02101.1-4"/>
    <property type="match status" value="1"/>
</dbReference>
<dbReference type="PANTHER" id="PTHR30283:SF4">
    <property type="entry name" value="PEROXIDE STRESS RESISTANCE PROTEIN YAAA"/>
    <property type="match status" value="1"/>
</dbReference>
<dbReference type="PANTHER" id="PTHR30283">
    <property type="entry name" value="PEROXIDE STRESS RESPONSE PROTEIN YAAA"/>
    <property type="match status" value="1"/>
</dbReference>
<dbReference type="Pfam" id="PF03883">
    <property type="entry name" value="H2O2_YaaD"/>
    <property type="match status" value="1"/>
</dbReference>
<sequence>MKILIPTAKEMNTDFPSIEAIPLKPESQAVLDALALYSASQLESFYKVSAEKAAEEFQNIQALKRQTAQHYPALKLFDGLMYRNIKRDKLTEAEQDYLENHVFITSALYGVVPVLSPMAPHRLDFLMKLKVAGKTLKSHWKAAYDETLKKEEVIFSLLSSEFETVFSKEIRAKMVTFKFMEDRGGQLKIHSTISKKARGAFLTALIENQVQTVGEARRLNFAGFVYREDLSQPQGLVFVKEV</sequence>